<proteinExistence type="inferred from homology"/>
<organismHost>
    <name type="scientific">Lactococcus lactis</name>
    <dbReference type="NCBI Taxonomy" id="1358"/>
</organismHost>
<name>ENDON_BPLSK</name>
<reference key="1">
    <citation type="journal article" date="1997" name="Mol. Microbiol.">
        <title>Analysis of the DNA sequence, gene expression, origin of replication and modular structure of the Lactococcus lactis lytic bacteriophage sk1.</title>
        <authorList>
            <person name="Chandry P.S."/>
            <person name="Moore S.C."/>
            <person name="Boyce J.D."/>
            <person name="Davidson B.E."/>
            <person name="Hillier A.J."/>
        </authorList>
    </citation>
    <scope>NUCLEOTIDE SEQUENCE [LARGE SCALE GENOMIC DNA]</scope>
</reference>
<feature type="chain" id="PRO_0000438257" description="Probable HNH endonuclease">
    <location>
        <begin position="1"/>
        <end position="94"/>
    </location>
</feature>
<protein>
    <recommendedName>
        <fullName evidence="1">Probable HNH endonuclease</fullName>
        <ecNumber>3.1.-.-</ecNumber>
    </recommendedName>
    <alternativeName>
        <fullName evidence="2">Gene product 3</fullName>
        <shortName evidence="2">gp3</shortName>
    </alternativeName>
</protein>
<accession>O21871</accession>
<comment type="function">
    <text evidence="1">Probable HNH endonuclease.</text>
</comment>
<comment type="similarity">
    <text evidence="2">Belongs to the skunalikevirus HNH endonuclease family.</text>
</comment>
<organism>
    <name type="scientific">Lactococcus phage SK1</name>
    <name type="common">Lactococcus lactis bacteriophage SK1</name>
    <dbReference type="NCBI Taxonomy" id="2905675"/>
    <lineage>
        <taxon>Viruses</taxon>
        <taxon>Duplodnaviria</taxon>
        <taxon>Heunggongvirae</taxon>
        <taxon>Uroviricota</taxon>
        <taxon>Caudoviricetes</taxon>
        <taxon>Skunavirus</taxon>
        <taxon>Skunavirus sk1</taxon>
    </lineage>
</organism>
<keyword id="KW-0255">Endonuclease</keyword>
<keyword id="KW-0378">Hydrolase</keyword>
<keyword id="KW-0540">Nuclease</keyword>
<keyword id="KW-1185">Reference proteome</keyword>
<evidence type="ECO:0000250" key="1">
    <source>
        <dbReference type="UniProtKB" id="D3WAC2"/>
    </source>
</evidence>
<evidence type="ECO:0000305" key="2"/>
<dbReference type="EC" id="3.1.-.-"/>
<dbReference type="EMBL" id="AF011378">
    <property type="protein sequence ID" value="AAB70042.1"/>
    <property type="molecule type" value="Genomic_DNA"/>
</dbReference>
<dbReference type="RefSeq" id="NP_044949.1">
    <property type="nucleotide sequence ID" value="NC_001835.1"/>
</dbReference>
<dbReference type="SMR" id="O21871"/>
<dbReference type="GeneID" id="1261299"/>
<dbReference type="KEGG" id="vg:1261299"/>
<dbReference type="Proteomes" id="UP000000839">
    <property type="component" value="Genome"/>
</dbReference>
<dbReference type="GO" id="GO:0004519">
    <property type="term" value="F:endonuclease activity"/>
    <property type="evidence" value="ECO:0007669"/>
    <property type="project" value="UniProtKB-KW"/>
</dbReference>
<dbReference type="GO" id="GO:0003676">
    <property type="term" value="F:nucleic acid binding"/>
    <property type="evidence" value="ECO:0007669"/>
    <property type="project" value="InterPro"/>
</dbReference>
<dbReference type="GO" id="GO:0008270">
    <property type="term" value="F:zinc ion binding"/>
    <property type="evidence" value="ECO:0007669"/>
    <property type="project" value="InterPro"/>
</dbReference>
<dbReference type="CDD" id="cd00085">
    <property type="entry name" value="HNHc"/>
    <property type="match status" value="1"/>
</dbReference>
<dbReference type="Gene3D" id="1.10.30.50">
    <property type="match status" value="1"/>
</dbReference>
<dbReference type="InterPro" id="IPR002711">
    <property type="entry name" value="HNH"/>
</dbReference>
<dbReference type="InterPro" id="IPR003615">
    <property type="entry name" value="HNH_nuc"/>
</dbReference>
<dbReference type="PANTHER" id="PTHR41286">
    <property type="entry name" value="HNH NUCLEASE YAJD-RELATED"/>
    <property type="match status" value="1"/>
</dbReference>
<dbReference type="PANTHER" id="PTHR41286:SF1">
    <property type="entry name" value="HNH NUCLEASE YAJD-RELATED"/>
    <property type="match status" value="1"/>
</dbReference>
<dbReference type="Pfam" id="PF01844">
    <property type="entry name" value="HNH"/>
    <property type="match status" value="1"/>
</dbReference>
<dbReference type="SMART" id="SM00507">
    <property type="entry name" value="HNHc"/>
    <property type="match status" value="1"/>
</dbReference>
<sequence>MKYNVDTVRESGWYNKKEWLAVRDYVRQRDKMTCVRCGAFGAKKYEVDHIVELTWENLDDWNIALNPDNLQLLCKSCHNKKTSEYKRGKGVSLW</sequence>